<gene>
    <name evidence="1" type="primary">mdtJ</name>
    <name type="ordered locus">SCH_1500</name>
</gene>
<reference key="1">
    <citation type="journal article" date="2005" name="Nucleic Acids Res.">
        <title>The genome sequence of Salmonella enterica serovar Choleraesuis, a highly invasive and resistant zoonotic pathogen.</title>
        <authorList>
            <person name="Chiu C.-H."/>
            <person name="Tang P."/>
            <person name="Chu C."/>
            <person name="Hu S."/>
            <person name="Bao Q."/>
            <person name="Yu J."/>
            <person name="Chou Y.-Y."/>
            <person name="Wang H.-S."/>
            <person name="Lee Y.-S."/>
        </authorList>
    </citation>
    <scope>NUCLEOTIDE SEQUENCE [LARGE SCALE GENOMIC DNA]</scope>
    <source>
        <strain>SC-B67</strain>
    </source>
</reference>
<feature type="chain" id="PRO_0000331174" description="Spermidine export protein MdtJ">
    <location>
        <begin position="1"/>
        <end position="120"/>
    </location>
</feature>
<feature type="transmembrane region" description="Helical" evidence="1">
    <location>
        <begin position="1"/>
        <end position="21"/>
    </location>
</feature>
<feature type="transmembrane region" description="Helical" evidence="1">
    <location>
        <begin position="31"/>
        <end position="51"/>
    </location>
</feature>
<feature type="transmembrane region" description="Helical" evidence="1">
    <location>
        <begin position="54"/>
        <end position="74"/>
    </location>
</feature>
<feature type="transmembrane region" description="Helical" evidence="1">
    <location>
        <begin position="81"/>
        <end position="101"/>
    </location>
</feature>
<keyword id="KW-0997">Cell inner membrane</keyword>
<keyword id="KW-1003">Cell membrane</keyword>
<keyword id="KW-0472">Membrane</keyword>
<keyword id="KW-0812">Transmembrane</keyword>
<keyword id="KW-1133">Transmembrane helix</keyword>
<keyword id="KW-0813">Transport</keyword>
<comment type="function">
    <text evidence="1">Catalyzes the excretion of spermidine.</text>
</comment>
<comment type="subunit">
    <text evidence="1">Forms a complex with MdtI.</text>
</comment>
<comment type="subcellular location">
    <subcellularLocation>
        <location evidence="1">Cell inner membrane</location>
        <topology evidence="1">Multi-pass membrane protein</topology>
    </subcellularLocation>
</comment>
<comment type="similarity">
    <text evidence="1">Belongs to the drug/metabolite transporter (DMT) superfamily. Small multidrug resistance (SMR) (TC 2.A.7.1) family. MdtJ subfamily.</text>
</comment>
<proteinExistence type="inferred from homology"/>
<evidence type="ECO:0000255" key="1">
    <source>
        <dbReference type="HAMAP-Rule" id="MF_01598"/>
    </source>
</evidence>
<dbReference type="EMBL" id="AE017220">
    <property type="protein sequence ID" value="AAX65406.1"/>
    <property type="molecule type" value="Genomic_DNA"/>
</dbReference>
<dbReference type="RefSeq" id="WP_000500278.1">
    <property type="nucleotide sequence ID" value="NC_006905.1"/>
</dbReference>
<dbReference type="SMR" id="Q57PF5"/>
<dbReference type="KEGG" id="sec:SCH_1500"/>
<dbReference type="HOGENOM" id="CLU_133067_0_0_6"/>
<dbReference type="Proteomes" id="UP000000538">
    <property type="component" value="Chromosome"/>
</dbReference>
<dbReference type="GO" id="GO:0005886">
    <property type="term" value="C:plasma membrane"/>
    <property type="evidence" value="ECO:0007669"/>
    <property type="project" value="UniProtKB-SubCell"/>
</dbReference>
<dbReference type="GO" id="GO:0015199">
    <property type="term" value="F:amino-acid betaine transmembrane transporter activity"/>
    <property type="evidence" value="ECO:0007669"/>
    <property type="project" value="TreeGrafter"/>
</dbReference>
<dbReference type="GO" id="GO:0015297">
    <property type="term" value="F:antiporter activity"/>
    <property type="evidence" value="ECO:0007669"/>
    <property type="project" value="TreeGrafter"/>
</dbReference>
<dbReference type="GO" id="GO:0015220">
    <property type="term" value="F:choline transmembrane transporter activity"/>
    <property type="evidence" value="ECO:0007669"/>
    <property type="project" value="TreeGrafter"/>
</dbReference>
<dbReference type="GO" id="GO:0015606">
    <property type="term" value="F:spermidine transmembrane transporter activity"/>
    <property type="evidence" value="ECO:0007669"/>
    <property type="project" value="UniProtKB-UniRule"/>
</dbReference>
<dbReference type="GO" id="GO:0031460">
    <property type="term" value="P:glycine betaine transport"/>
    <property type="evidence" value="ECO:0007669"/>
    <property type="project" value="TreeGrafter"/>
</dbReference>
<dbReference type="FunFam" id="1.10.3730.20:FF:000001">
    <property type="entry name" value="Quaternary ammonium compound resistance transporter SugE"/>
    <property type="match status" value="1"/>
</dbReference>
<dbReference type="Gene3D" id="1.10.3730.20">
    <property type="match status" value="1"/>
</dbReference>
<dbReference type="HAMAP" id="MF_01598">
    <property type="entry name" value="MdtJ"/>
    <property type="match status" value="1"/>
</dbReference>
<dbReference type="InterPro" id="IPR000390">
    <property type="entry name" value="Small_drug/metabolite_transptr"/>
</dbReference>
<dbReference type="InterPro" id="IPR045324">
    <property type="entry name" value="Small_multidrug_res"/>
</dbReference>
<dbReference type="InterPro" id="IPR023740">
    <property type="entry name" value="Spermidine_export_MdtJ"/>
</dbReference>
<dbReference type="NCBIfam" id="NF007767">
    <property type="entry name" value="PRK10452.1"/>
    <property type="match status" value="1"/>
</dbReference>
<dbReference type="PANTHER" id="PTHR30561">
    <property type="entry name" value="SMR FAMILY PROTON-DEPENDENT DRUG EFFLUX TRANSPORTER SUGE"/>
    <property type="match status" value="1"/>
</dbReference>
<dbReference type="PANTHER" id="PTHR30561:SF2">
    <property type="entry name" value="SPERMIDINE EXPORT PROTEIN MDTJ"/>
    <property type="match status" value="1"/>
</dbReference>
<dbReference type="Pfam" id="PF00893">
    <property type="entry name" value="Multi_Drug_Res"/>
    <property type="match status" value="1"/>
</dbReference>
<dbReference type="SUPFAM" id="SSF103481">
    <property type="entry name" value="Multidrug resistance efflux transporter EmrE"/>
    <property type="match status" value="1"/>
</dbReference>
<accession>Q57PF5</accession>
<name>MDTJ_SALCH</name>
<protein>
    <recommendedName>
        <fullName evidence="1">Spermidine export protein MdtJ</fullName>
    </recommendedName>
</protein>
<sequence length="120" mass="12915">MFYWILLALAIATEITGTLSMKWASVGNGNAGFILMLVMITLSYIFLSFAVKKIALGVAYALWEGIGILFITIFSVLLFDEALSTMKIAGLLTLVAGIVLIKSGTRKPGKPVKEATRATI</sequence>
<organism>
    <name type="scientific">Salmonella choleraesuis (strain SC-B67)</name>
    <dbReference type="NCBI Taxonomy" id="321314"/>
    <lineage>
        <taxon>Bacteria</taxon>
        <taxon>Pseudomonadati</taxon>
        <taxon>Pseudomonadota</taxon>
        <taxon>Gammaproteobacteria</taxon>
        <taxon>Enterobacterales</taxon>
        <taxon>Enterobacteriaceae</taxon>
        <taxon>Salmonella</taxon>
    </lineage>
</organism>